<evidence type="ECO:0000255" key="1">
    <source>
        <dbReference type="HAMAP-Rule" id="MF_01818"/>
    </source>
</evidence>
<proteinExistence type="inferred from homology"/>
<sequence>MPLLKLVFLGTGGAVPRADRMLPAIYLEDWLGHRILLDAGEGVQYRLFQIGVAPSSLTLVAVTHMHEDHVLGLPGLVITAKFLGGKVKLLGPRSAHGILSRLGVDVADGYDGGRLRVRCVEVCHTVDACGWLLEWDVGYKLDLKKVEGLPKWALTKLIRGEEVEVGGRVIRPEEVADPAHKRYRRLLYTGDTGPCPRMLKTVGEVDVLIHEATFADDVDPNKAHEEGHSTVADAVEAAKALRAGVLVLTHISARYTDKARHRQLAGRVPPPPHVYVPDDFDTLLVQL</sequence>
<comment type="function">
    <text evidence="1">Zinc phosphodiesterase, which displays some tRNA 3'-processing endonuclease activity. Probably involved in tRNA maturation, by removing a 3'-trailer from precursor tRNA.</text>
</comment>
<comment type="catalytic activity">
    <reaction evidence="1">
        <text>Endonucleolytic cleavage of RNA, removing extra 3' nucleotides from tRNA precursor, generating 3' termini of tRNAs. A 3'-hydroxy group is left at the tRNA terminus and a 5'-phosphoryl group is left at the trailer molecule.</text>
        <dbReference type="EC" id="3.1.26.11"/>
    </reaction>
</comment>
<comment type="cofactor">
    <cofactor evidence="1">
        <name>Zn(2+)</name>
        <dbReference type="ChEBI" id="CHEBI:29105"/>
    </cofactor>
    <text evidence="1">Binds 2 Zn(2+) ions.</text>
</comment>
<comment type="subunit">
    <text evidence="1">Homodimer.</text>
</comment>
<comment type="similarity">
    <text evidence="1">Belongs to the RNase Z family.</text>
</comment>
<gene>
    <name evidence="1" type="primary">rnz</name>
    <name type="ordered locus">Pars_1383</name>
</gene>
<keyword id="KW-0255">Endonuclease</keyword>
<keyword id="KW-0378">Hydrolase</keyword>
<keyword id="KW-0479">Metal-binding</keyword>
<keyword id="KW-0540">Nuclease</keyword>
<keyword id="KW-0819">tRNA processing</keyword>
<keyword id="KW-0862">Zinc</keyword>
<accession>A4WKM8</accession>
<organism>
    <name type="scientific">Pyrobaculum arsenaticum (strain DSM 13514 / JCM 11321 / PZ6)</name>
    <dbReference type="NCBI Taxonomy" id="340102"/>
    <lineage>
        <taxon>Archaea</taxon>
        <taxon>Thermoproteota</taxon>
        <taxon>Thermoprotei</taxon>
        <taxon>Thermoproteales</taxon>
        <taxon>Thermoproteaceae</taxon>
        <taxon>Pyrobaculum</taxon>
    </lineage>
</organism>
<name>RNZ_PYRAR</name>
<feature type="chain" id="PRO_1000070323" description="Ribonuclease Z">
    <location>
        <begin position="1"/>
        <end position="287"/>
    </location>
</feature>
<feature type="active site" description="Proton acceptor" evidence="1">
    <location>
        <position position="68"/>
    </location>
</feature>
<feature type="binding site" evidence="1">
    <location>
        <position position="64"/>
    </location>
    <ligand>
        <name>Zn(2+)</name>
        <dbReference type="ChEBI" id="CHEBI:29105"/>
        <label>1</label>
        <note>catalytic</note>
    </ligand>
</feature>
<feature type="binding site" evidence="1">
    <location>
        <position position="66"/>
    </location>
    <ligand>
        <name>Zn(2+)</name>
        <dbReference type="ChEBI" id="CHEBI:29105"/>
        <label>1</label>
        <note>catalytic</note>
    </ligand>
</feature>
<feature type="binding site" evidence="1">
    <location>
        <position position="68"/>
    </location>
    <ligand>
        <name>Zn(2+)</name>
        <dbReference type="ChEBI" id="CHEBI:29105"/>
        <label>2</label>
        <note>catalytic</note>
    </ligand>
</feature>
<feature type="binding site" evidence="1">
    <location>
        <position position="69"/>
    </location>
    <ligand>
        <name>Zn(2+)</name>
        <dbReference type="ChEBI" id="CHEBI:29105"/>
        <label>2</label>
        <note>catalytic</note>
    </ligand>
</feature>
<feature type="binding site" evidence="1">
    <location>
        <position position="124"/>
    </location>
    <ligand>
        <name>Zn(2+)</name>
        <dbReference type="ChEBI" id="CHEBI:29105"/>
        <label>1</label>
        <note>catalytic</note>
    </ligand>
</feature>
<feature type="binding site" evidence="1">
    <location>
        <position position="191"/>
    </location>
    <ligand>
        <name>Zn(2+)</name>
        <dbReference type="ChEBI" id="CHEBI:29105"/>
        <label>1</label>
        <note>catalytic</note>
    </ligand>
</feature>
<feature type="binding site" evidence="1">
    <location>
        <position position="191"/>
    </location>
    <ligand>
        <name>Zn(2+)</name>
        <dbReference type="ChEBI" id="CHEBI:29105"/>
        <label>2</label>
        <note>catalytic</note>
    </ligand>
</feature>
<feature type="binding site" evidence="1">
    <location>
        <position position="250"/>
    </location>
    <ligand>
        <name>Zn(2+)</name>
        <dbReference type="ChEBI" id="CHEBI:29105"/>
        <label>2</label>
        <note>catalytic</note>
    </ligand>
</feature>
<dbReference type="EC" id="3.1.26.11" evidence="1"/>
<dbReference type="EMBL" id="CP000660">
    <property type="protein sequence ID" value="ABP50945.1"/>
    <property type="molecule type" value="Genomic_DNA"/>
</dbReference>
<dbReference type="SMR" id="A4WKM8"/>
<dbReference type="STRING" id="340102.Pars_1383"/>
<dbReference type="KEGG" id="pas:Pars_1383"/>
<dbReference type="HOGENOM" id="CLU_031317_2_1_2"/>
<dbReference type="OrthoDB" id="85118at2157"/>
<dbReference type="PhylomeDB" id="A4WKM8"/>
<dbReference type="Proteomes" id="UP000001567">
    <property type="component" value="Chromosome"/>
</dbReference>
<dbReference type="GO" id="GO:0042781">
    <property type="term" value="F:3'-tRNA processing endoribonuclease activity"/>
    <property type="evidence" value="ECO:0007669"/>
    <property type="project" value="UniProtKB-UniRule"/>
</dbReference>
<dbReference type="GO" id="GO:0008270">
    <property type="term" value="F:zinc ion binding"/>
    <property type="evidence" value="ECO:0007669"/>
    <property type="project" value="UniProtKB-UniRule"/>
</dbReference>
<dbReference type="Gene3D" id="3.60.15.10">
    <property type="entry name" value="Ribonuclease Z/Hydroxyacylglutathione hydrolase-like"/>
    <property type="match status" value="1"/>
</dbReference>
<dbReference type="HAMAP" id="MF_01818">
    <property type="entry name" value="RNase_Z_BN"/>
    <property type="match status" value="1"/>
</dbReference>
<dbReference type="InterPro" id="IPR001279">
    <property type="entry name" value="Metallo-B-lactamas"/>
</dbReference>
<dbReference type="InterPro" id="IPR036866">
    <property type="entry name" value="RibonucZ/Hydroxyglut_hydro"/>
</dbReference>
<dbReference type="InterPro" id="IPR013471">
    <property type="entry name" value="RNase_Z/BN"/>
</dbReference>
<dbReference type="PANTHER" id="PTHR46018">
    <property type="entry name" value="ZINC PHOSPHODIESTERASE ELAC PROTEIN 1"/>
    <property type="match status" value="1"/>
</dbReference>
<dbReference type="PANTHER" id="PTHR46018:SF2">
    <property type="entry name" value="ZINC PHOSPHODIESTERASE ELAC PROTEIN 1"/>
    <property type="match status" value="1"/>
</dbReference>
<dbReference type="Pfam" id="PF12706">
    <property type="entry name" value="Lactamase_B_2"/>
    <property type="match status" value="1"/>
</dbReference>
<dbReference type="SUPFAM" id="SSF56281">
    <property type="entry name" value="Metallo-hydrolase/oxidoreductase"/>
    <property type="match status" value="1"/>
</dbReference>
<reference key="1">
    <citation type="submission" date="2007-04" db="EMBL/GenBank/DDBJ databases">
        <title>Complete sequence of Pyrobaculum arsenaticum DSM 13514.</title>
        <authorList>
            <consortium name="US DOE Joint Genome Institute"/>
            <person name="Copeland A."/>
            <person name="Lucas S."/>
            <person name="Lapidus A."/>
            <person name="Barry K."/>
            <person name="Glavina del Rio T."/>
            <person name="Dalin E."/>
            <person name="Tice H."/>
            <person name="Pitluck S."/>
            <person name="Chain P."/>
            <person name="Malfatti S."/>
            <person name="Shin M."/>
            <person name="Vergez L."/>
            <person name="Schmutz J."/>
            <person name="Larimer F."/>
            <person name="Land M."/>
            <person name="Hauser L."/>
            <person name="Kyrpides N."/>
            <person name="Mikhailova N."/>
            <person name="Cozen A.E."/>
            <person name="Fitz-Gibbon S.T."/>
            <person name="House C.H."/>
            <person name="Saltikov C."/>
            <person name="Lowe T.M."/>
            <person name="Richardson P."/>
        </authorList>
    </citation>
    <scope>NUCLEOTIDE SEQUENCE [LARGE SCALE GENOMIC DNA]</scope>
    <source>
        <strain>ATCC 700994 / DSM 13514 / JCM 11321 / PZ6</strain>
    </source>
</reference>
<protein>
    <recommendedName>
        <fullName evidence="1">Ribonuclease Z</fullName>
        <shortName evidence="1">RNase Z</shortName>
        <ecNumber evidence="1">3.1.26.11</ecNumber>
    </recommendedName>
    <alternativeName>
        <fullName evidence="1">tRNA 3 endonuclease</fullName>
    </alternativeName>
    <alternativeName>
        <fullName evidence="1">tRNase Z</fullName>
    </alternativeName>
</protein>